<comment type="function">
    <text evidence="1">Converts seryl-tRNA(Sec) to selenocysteinyl-tRNA(Sec) required for selenoprotein biosynthesis.</text>
</comment>
<comment type="catalytic activity">
    <reaction evidence="1">
        <text>L-seryl-tRNA(Sec) + selenophosphate + H(+) = L-selenocysteinyl-tRNA(Sec) + phosphate</text>
        <dbReference type="Rhea" id="RHEA:22728"/>
        <dbReference type="Rhea" id="RHEA-COMP:9742"/>
        <dbReference type="Rhea" id="RHEA-COMP:9743"/>
        <dbReference type="ChEBI" id="CHEBI:15378"/>
        <dbReference type="ChEBI" id="CHEBI:16144"/>
        <dbReference type="ChEBI" id="CHEBI:43474"/>
        <dbReference type="ChEBI" id="CHEBI:78533"/>
        <dbReference type="ChEBI" id="CHEBI:78573"/>
        <dbReference type="EC" id="2.9.1.1"/>
    </reaction>
</comment>
<comment type="cofactor">
    <cofactor evidence="1">
        <name>pyridoxal 5'-phosphate</name>
        <dbReference type="ChEBI" id="CHEBI:597326"/>
    </cofactor>
</comment>
<comment type="pathway">
    <text evidence="1">Aminoacyl-tRNA biosynthesis; selenocysteinyl-tRNA(Sec) biosynthesis; selenocysteinyl-tRNA(Sec) from L-seryl-tRNA(Sec) (bacterial route): step 1/1.</text>
</comment>
<comment type="subunit">
    <text evidence="1">Homodecamer; pentamer of dimers. Binds only one seryl-tRNA(Sec) per dimer.</text>
</comment>
<comment type="subcellular location">
    <subcellularLocation>
        <location evidence="1">Cytoplasm</location>
    </subcellularLocation>
</comment>
<comment type="similarity">
    <text evidence="1">Belongs to the SelA family.</text>
</comment>
<sequence length="463" mass="50828">MTSETRTLYSQLPAIDRLLHDSAFLSLRDRYGHTQVVDLLRRMLDDARDVIRNTQTLPDWYADWAQEAKLRLENAAQSALRPVINLTGTVLHTNLGRALQAQEAIEAVTQAMRAPVTLEYDLDGAGRGHRDRALATLLCRITGAEDACIVNNNAAAVLLMLAATASGKEVVVSRGELVEIGGAFRIPDVMRQAGCTLHEVGTTNRTHAKDYRQAVNENTGLLMKVHTSNYSIEGFTKTVEEAELAEIGRELDIPVVADLGSGSLVDLSQYGLPKEPMPQQLIAAGVSLVSFSGDKLLGGPQAGIIVGKKAMIAQLQSHPLKRALRADKMTLAALEATLRLYLHPEALAEKLPTLRLLTRSEASIREQAQRLQARLAARYGDEFALEVKPCLSQIGSGSLPVDRLPSAAMTFTPHDGRGSRLEALAARWRTLPVPVIGRIYDGRLWLDMRCLEDESRFMEMMLK</sequence>
<feature type="chain" id="PRO_1000124157" description="L-seryl-tRNA(Sec) selenium transferase">
    <location>
        <begin position="1"/>
        <end position="463"/>
    </location>
</feature>
<feature type="modified residue" description="N6-(pyridoxal phosphate)lysine" evidence="1">
    <location>
        <position position="295"/>
    </location>
</feature>
<name>SELA_SALSV</name>
<evidence type="ECO:0000255" key="1">
    <source>
        <dbReference type="HAMAP-Rule" id="MF_00423"/>
    </source>
</evidence>
<accession>B4TZT5</accession>
<dbReference type="EC" id="2.9.1.1" evidence="1"/>
<dbReference type="EMBL" id="CP001127">
    <property type="protein sequence ID" value="ACF88697.1"/>
    <property type="molecule type" value="Genomic_DNA"/>
</dbReference>
<dbReference type="RefSeq" id="WP_000200188.1">
    <property type="nucleotide sequence ID" value="NC_011094.1"/>
</dbReference>
<dbReference type="SMR" id="B4TZT5"/>
<dbReference type="KEGG" id="sew:SeSA_A3883"/>
<dbReference type="HOGENOM" id="CLU_038142_1_0_6"/>
<dbReference type="UniPathway" id="UPA00906">
    <property type="reaction ID" value="UER00896"/>
</dbReference>
<dbReference type="Proteomes" id="UP000001865">
    <property type="component" value="Chromosome"/>
</dbReference>
<dbReference type="GO" id="GO:0005737">
    <property type="term" value="C:cytoplasm"/>
    <property type="evidence" value="ECO:0007669"/>
    <property type="project" value="UniProtKB-SubCell"/>
</dbReference>
<dbReference type="GO" id="GO:0004125">
    <property type="term" value="F:L-seryl-tRNA(Sec) selenium transferase activity"/>
    <property type="evidence" value="ECO:0007669"/>
    <property type="project" value="UniProtKB-UniRule"/>
</dbReference>
<dbReference type="GO" id="GO:0001717">
    <property type="term" value="P:conversion of seryl-tRNAsec to selenocys-tRNAsec"/>
    <property type="evidence" value="ECO:0007669"/>
    <property type="project" value="UniProtKB-UniRule"/>
</dbReference>
<dbReference type="GO" id="GO:0001514">
    <property type="term" value="P:selenocysteine incorporation"/>
    <property type="evidence" value="ECO:0007669"/>
    <property type="project" value="UniProtKB-UniRule"/>
</dbReference>
<dbReference type="FunFam" id="3.40.640.10:FF:000028">
    <property type="entry name" value="L-seryl-tRNA(Sec) selenium transferase"/>
    <property type="match status" value="1"/>
</dbReference>
<dbReference type="FunFam" id="3.90.1150.180:FF:000001">
    <property type="entry name" value="L-seryl-tRNA(Sec) selenium transferase"/>
    <property type="match status" value="1"/>
</dbReference>
<dbReference type="Gene3D" id="3.90.1150.180">
    <property type="match status" value="1"/>
</dbReference>
<dbReference type="Gene3D" id="3.40.640.10">
    <property type="entry name" value="Type I PLP-dependent aspartate aminotransferase-like (Major domain)"/>
    <property type="match status" value="1"/>
</dbReference>
<dbReference type="HAMAP" id="MF_00423">
    <property type="entry name" value="SelA"/>
    <property type="match status" value="1"/>
</dbReference>
<dbReference type="InterPro" id="IPR015424">
    <property type="entry name" value="PyrdxlP-dep_Trfase"/>
</dbReference>
<dbReference type="InterPro" id="IPR015421">
    <property type="entry name" value="PyrdxlP-dep_Trfase_major"/>
</dbReference>
<dbReference type="InterPro" id="IPR018319">
    <property type="entry name" value="SelA-like"/>
</dbReference>
<dbReference type="InterPro" id="IPR004534">
    <property type="entry name" value="SelA_trans"/>
</dbReference>
<dbReference type="InterPro" id="IPR025862">
    <property type="entry name" value="SelA_trans_N_dom"/>
</dbReference>
<dbReference type="NCBIfam" id="TIGR00474">
    <property type="entry name" value="selA"/>
    <property type="match status" value="1"/>
</dbReference>
<dbReference type="PANTHER" id="PTHR32328">
    <property type="entry name" value="L-SERYL-TRNA(SEC) SELENIUM TRANSFERASE"/>
    <property type="match status" value="1"/>
</dbReference>
<dbReference type="PANTHER" id="PTHR32328:SF0">
    <property type="entry name" value="L-SERYL-TRNA(SEC) SELENIUM TRANSFERASE"/>
    <property type="match status" value="1"/>
</dbReference>
<dbReference type="Pfam" id="PF12390">
    <property type="entry name" value="Se-cys_synth_N"/>
    <property type="match status" value="1"/>
</dbReference>
<dbReference type="Pfam" id="PF03841">
    <property type="entry name" value="SelA"/>
    <property type="match status" value="1"/>
</dbReference>
<dbReference type="SUPFAM" id="SSF53383">
    <property type="entry name" value="PLP-dependent transferases"/>
    <property type="match status" value="1"/>
</dbReference>
<protein>
    <recommendedName>
        <fullName evidence="1">L-seryl-tRNA(Sec) selenium transferase</fullName>
        <ecNumber evidence="1">2.9.1.1</ecNumber>
    </recommendedName>
    <alternativeName>
        <fullName evidence="1">Selenocysteine synthase</fullName>
        <shortName evidence="1">Sec synthase</shortName>
    </alternativeName>
    <alternativeName>
        <fullName evidence="1">Selenocysteinyl-tRNA(Sec) synthase</fullName>
    </alternativeName>
</protein>
<organism>
    <name type="scientific">Salmonella schwarzengrund (strain CVM19633)</name>
    <dbReference type="NCBI Taxonomy" id="439843"/>
    <lineage>
        <taxon>Bacteria</taxon>
        <taxon>Pseudomonadati</taxon>
        <taxon>Pseudomonadota</taxon>
        <taxon>Gammaproteobacteria</taxon>
        <taxon>Enterobacterales</taxon>
        <taxon>Enterobacteriaceae</taxon>
        <taxon>Salmonella</taxon>
    </lineage>
</organism>
<gene>
    <name evidence="1" type="primary">selA</name>
    <name type="ordered locus">SeSA_A3883</name>
</gene>
<keyword id="KW-0963">Cytoplasm</keyword>
<keyword id="KW-0648">Protein biosynthesis</keyword>
<keyword id="KW-0663">Pyridoxal phosphate</keyword>
<keyword id="KW-0711">Selenium</keyword>
<keyword id="KW-0808">Transferase</keyword>
<proteinExistence type="inferred from homology"/>
<reference key="1">
    <citation type="journal article" date="2011" name="J. Bacteriol.">
        <title>Comparative genomics of 28 Salmonella enterica isolates: evidence for CRISPR-mediated adaptive sublineage evolution.</title>
        <authorList>
            <person name="Fricke W.F."/>
            <person name="Mammel M.K."/>
            <person name="McDermott P.F."/>
            <person name="Tartera C."/>
            <person name="White D.G."/>
            <person name="Leclerc J.E."/>
            <person name="Ravel J."/>
            <person name="Cebula T.A."/>
        </authorList>
    </citation>
    <scope>NUCLEOTIDE SEQUENCE [LARGE SCALE GENOMIC DNA]</scope>
    <source>
        <strain>CVM19633</strain>
    </source>
</reference>